<gene>
    <name evidence="1" type="primary">rex</name>
    <name type="ordered locus">Nther_1863</name>
</gene>
<reference key="1">
    <citation type="submission" date="2008-04" db="EMBL/GenBank/DDBJ databases">
        <title>Complete sequence of chromosome of Natranaerobius thermophilus JW/NM-WN-LF.</title>
        <authorList>
            <consortium name="US DOE Joint Genome Institute"/>
            <person name="Copeland A."/>
            <person name="Lucas S."/>
            <person name="Lapidus A."/>
            <person name="Glavina del Rio T."/>
            <person name="Dalin E."/>
            <person name="Tice H."/>
            <person name="Bruce D."/>
            <person name="Goodwin L."/>
            <person name="Pitluck S."/>
            <person name="Chertkov O."/>
            <person name="Brettin T."/>
            <person name="Detter J.C."/>
            <person name="Han C."/>
            <person name="Kuske C.R."/>
            <person name="Schmutz J."/>
            <person name="Larimer F."/>
            <person name="Land M."/>
            <person name="Hauser L."/>
            <person name="Kyrpides N."/>
            <person name="Lykidis A."/>
            <person name="Mesbah N.M."/>
            <person name="Wiegel J."/>
        </authorList>
    </citation>
    <scope>NUCLEOTIDE SEQUENCE [LARGE SCALE GENOMIC DNA]</scope>
    <source>
        <strain>ATCC BAA-1301 / DSM 18059 / JW/NM-WN-LF</strain>
    </source>
</reference>
<proteinExistence type="inferred from homology"/>
<sequence>MNQRGEAPISVIKRLPVYLRVLDNLVKRDIEVVSSKSLSKETGFTAEQIRKDLAFFGAFGTRGTGYNTNYLRERVLRIIGLDKQTNVAIVGAGHLGTAFARYNVRENPYTSVVGLFDVSPDIVGENIEGVPVYHLNDLQEIVRKERVQVGVITVPAVHAQEVVDRLVEENVKALLNFAPAKLTAPEDVRIHNVDLTIELQSLIYFAKDELNEESTQDLE</sequence>
<evidence type="ECO:0000255" key="1">
    <source>
        <dbReference type="HAMAP-Rule" id="MF_01131"/>
    </source>
</evidence>
<name>REX_NATTJ</name>
<feature type="chain" id="PRO_1000137329" description="Redox-sensing transcriptional repressor Rex">
    <location>
        <begin position="1"/>
        <end position="219"/>
    </location>
</feature>
<feature type="DNA-binding region" description="H-T-H motif" evidence="1">
    <location>
        <begin position="17"/>
        <end position="56"/>
    </location>
</feature>
<feature type="binding site" evidence="1">
    <location>
        <begin position="91"/>
        <end position="96"/>
    </location>
    <ligand>
        <name>NAD(+)</name>
        <dbReference type="ChEBI" id="CHEBI:57540"/>
    </ligand>
</feature>
<organism>
    <name type="scientific">Natranaerobius thermophilus (strain ATCC BAA-1301 / DSM 18059 / JW/NM-WN-LF)</name>
    <dbReference type="NCBI Taxonomy" id="457570"/>
    <lineage>
        <taxon>Bacteria</taxon>
        <taxon>Bacillati</taxon>
        <taxon>Bacillota</taxon>
        <taxon>Clostridia</taxon>
        <taxon>Natranaerobiales</taxon>
        <taxon>Natranaerobiaceae</taxon>
        <taxon>Natranaerobius</taxon>
    </lineage>
</organism>
<keyword id="KW-0963">Cytoplasm</keyword>
<keyword id="KW-0238">DNA-binding</keyword>
<keyword id="KW-0520">NAD</keyword>
<keyword id="KW-1185">Reference proteome</keyword>
<keyword id="KW-0678">Repressor</keyword>
<keyword id="KW-0804">Transcription</keyword>
<keyword id="KW-0805">Transcription regulation</keyword>
<accession>B2A618</accession>
<comment type="function">
    <text evidence="1">Modulates transcription in response to changes in cellular NADH/NAD(+) redox state.</text>
</comment>
<comment type="subunit">
    <text evidence="1">Homodimer.</text>
</comment>
<comment type="subcellular location">
    <subcellularLocation>
        <location evidence="1">Cytoplasm</location>
    </subcellularLocation>
</comment>
<comment type="similarity">
    <text evidence="1">Belongs to the transcriptional regulatory Rex family.</text>
</comment>
<protein>
    <recommendedName>
        <fullName evidence="1">Redox-sensing transcriptional repressor Rex</fullName>
    </recommendedName>
</protein>
<dbReference type="EMBL" id="CP001034">
    <property type="protein sequence ID" value="ACB85435.1"/>
    <property type="molecule type" value="Genomic_DNA"/>
</dbReference>
<dbReference type="RefSeq" id="WP_012448300.1">
    <property type="nucleotide sequence ID" value="NC_010718.1"/>
</dbReference>
<dbReference type="SMR" id="B2A618"/>
<dbReference type="FunCoup" id="B2A618">
    <property type="interactions" value="22"/>
</dbReference>
<dbReference type="STRING" id="457570.Nther_1863"/>
<dbReference type="KEGG" id="nth:Nther_1863"/>
<dbReference type="eggNOG" id="COG2344">
    <property type="taxonomic scope" value="Bacteria"/>
</dbReference>
<dbReference type="HOGENOM" id="CLU_061534_1_0_9"/>
<dbReference type="InParanoid" id="B2A618"/>
<dbReference type="OrthoDB" id="9784760at2"/>
<dbReference type="Proteomes" id="UP000001683">
    <property type="component" value="Chromosome"/>
</dbReference>
<dbReference type="GO" id="GO:0005737">
    <property type="term" value="C:cytoplasm"/>
    <property type="evidence" value="ECO:0007669"/>
    <property type="project" value="UniProtKB-SubCell"/>
</dbReference>
<dbReference type="GO" id="GO:0003677">
    <property type="term" value="F:DNA binding"/>
    <property type="evidence" value="ECO:0007669"/>
    <property type="project" value="UniProtKB-UniRule"/>
</dbReference>
<dbReference type="GO" id="GO:0003700">
    <property type="term" value="F:DNA-binding transcription factor activity"/>
    <property type="evidence" value="ECO:0007669"/>
    <property type="project" value="UniProtKB-UniRule"/>
</dbReference>
<dbReference type="GO" id="GO:0045892">
    <property type="term" value="P:negative regulation of DNA-templated transcription"/>
    <property type="evidence" value="ECO:0007669"/>
    <property type="project" value="InterPro"/>
</dbReference>
<dbReference type="GO" id="GO:0051775">
    <property type="term" value="P:response to redox state"/>
    <property type="evidence" value="ECO:0007669"/>
    <property type="project" value="InterPro"/>
</dbReference>
<dbReference type="Gene3D" id="3.40.50.720">
    <property type="entry name" value="NAD(P)-binding Rossmann-like Domain"/>
    <property type="match status" value="1"/>
</dbReference>
<dbReference type="Gene3D" id="1.10.10.10">
    <property type="entry name" value="Winged helix-like DNA-binding domain superfamily/Winged helix DNA-binding domain"/>
    <property type="match status" value="1"/>
</dbReference>
<dbReference type="HAMAP" id="MF_01131">
    <property type="entry name" value="Rex"/>
    <property type="match status" value="1"/>
</dbReference>
<dbReference type="InterPro" id="IPR003781">
    <property type="entry name" value="CoA-bd"/>
</dbReference>
<dbReference type="InterPro" id="IPR036291">
    <property type="entry name" value="NAD(P)-bd_dom_sf"/>
</dbReference>
<dbReference type="InterPro" id="IPR009718">
    <property type="entry name" value="Rex_DNA-bd_C_dom"/>
</dbReference>
<dbReference type="InterPro" id="IPR022876">
    <property type="entry name" value="Tscrpt_rep_Rex"/>
</dbReference>
<dbReference type="InterPro" id="IPR036388">
    <property type="entry name" value="WH-like_DNA-bd_sf"/>
</dbReference>
<dbReference type="InterPro" id="IPR036390">
    <property type="entry name" value="WH_DNA-bd_sf"/>
</dbReference>
<dbReference type="NCBIfam" id="NF003989">
    <property type="entry name" value="PRK05472.1-3"/>
    <property type="match status" value="1"/>
</dbReference>
<dbReference type="NCBIfam" id="NF003993">
    <property type="entry name" value="PRK05472.2-2"/>
    <property type="match status" value="1"/>
</dbReference>
<dbReference type="NCBIfam" id="NF003994">
    <property type="entry name" value="PRK05472.2-3"/>
    <property type="match status" value="1"/>
</dbReference>
<dbReference type="NCBIfam" id="NF003995">
    <property type="entry name" value="PRK05472.2-4"/>
    <property type="match status" value="1"/>
</dbReference>
<dbReference type="NCBIfam" id="NF003996">
    <property type="entry name" value="PRK05472.2-5"/>
    <property type="match status" value="1"/>
</dbReference>
<dbReference type="PANTHER" id="PTHR35786">
    <property type="entry name" value="REDOX-SENSING TRANSCRIPTIONAL REPRESSOR REX"/>
    <property type="match status" value="1"/>
</dbReference>
<dbReference type="PANTHER" id="PTHR35786:SF1">
    <property type="entry name" value="REDOX-SENSING TRANSCRIPTIONAL REPRESSOR REX 1"/>
    <property type="match status" value="1"/>
</dbReference>
<dbReference type="Pfam" id="PF02629">
    <property type="entry name" value="CoA_binding"/>
    <property type="match status" value="1"/>
</dbReference>
<dbReference type="Pfam" id="PF06971">
    <property type="entry name" value="Put_DNA-bind_N"/>
    <property type="match status" value="1"/>
</dbReference>
<dbReference type="SMART" id="SM00881">
    <property type="entry name" value="CoA_binding"/>
    <property type="match status" value="1"/>
</dbReference>
<dbReference type="SUPFAM" id="SSF51735">
    <property type="entry name" value="NAD(P)-binding Rossmann-fold domains"/>
    <property type="match status" value="1"/>
</dbReference>
<dbReference type="SUPFAM" id="SSF46785">
    <property type="entry name" value="Winged helix' DNA-binding domain"/>
    <property type="match status" value="1"/>
</dbReference>